<organismHost>
    <name type="scientific">Sus scrofa</name>
    <name type="common">Pig</name>
    <dbReference type="NCBI Taxonomy" id="9823"/>
</organismHost>
<organism>
    <name type="scientific">Porcine enterovirus 9 (strain UKG/410/73)</name>
    <dbReference type="NCBI Taxonomy" id="64141"/>
    <lineage>
        <taxon>Viruses</taxon>
        <taxon>Riboviria</taxon>
        <taxon>Orthornavirae</taxon>
        <taxon>Pisuviricota</taxon>
        <taxon>Pisoniviricetes</taxon>
        <taxon>Picornavirales</taxon>
        <taxon>Picornaviridae</taxon>
        <taxon>Ensavirinae</taxon>
        <taxon>Enterovirus</taxon>
        <taxon>Enterovirus G</taxon>
    </lineage>
</organism>
<name>POLG_PEV9U</name>
<reference key="1">
    <citation type="submission" date="1997-08" db="EMBL/GenBank/DDBJ databases">
        <title>Nucleotide sequence of porcine enterovirus serotype 9 and its relationship to other members of the family Picornaviridae, genus Enterovirus.</title>
        <authorList>
            <person name="Peng J.H."/>
            <person name="McCauley J.W."/>
            <person name="Kitching R.P."/>
            <person name="Knowles N.J."/>
        </authorList>
    </citation>
    <scope>NUCLEOTIDE SEQUENCE [GENOMIC RNA]</scope>
</reference>
<sequence length="2168" mass="241238">MGMQMSKNTAGSHTTVTQASGGSHINYTNINYYSHSASASQNKQDITQDPSKFTQPMVDIMKESAVPLKSPSAEACGYSDRVAQLTLGNSTITTQEAANITVAYGEWPSYLSDLDATAVDKTTKPGVSCDRFYTLPGKKWEATTKGWEWKLPDALTELGVFGQNCQFHFLYRCGWSIHVQCNATKFHQGTLLVVAVPDHQLGTTYQPEFDNVMPGKAGREVKYPYNFEDGTSLANSLIYPHQWINLRTNNSATLVLPYANAIPMDSPIRHSSWSLLVIPVVPLACATGTTPFVGITITLAPMFSEFSGLRRAIAQGIPTTNTPGSYQFLTTDEDSSACILPDFTPTQEIHIPGEVKNLQALCQVESLLEINNVDGKTGIERLRLEVSTQSELDRQLFALKVSFTEGEIMSKTLCGVMCSYYTQWSGSLEITFMFTGSFMTTGKLLLAYTPPGGSAPASREDAMLGTHVIWDFGLQSSITLVVPWICGGYYRDVNRANNYYAAGYVTGWFQTNMVIPPDFPSTAYILCFLAAQPNFSLRILKDRPDITQTAALQAPVETALNSAISSVIAGITAQDTQPSSHNISTSETPALQAAETGASSNASDEGMMETRHVVNTNTVSETSIESFYGRCGLVSIKEIADNKQVEKWLVNFNEFVQLRAKIELFTYMRFDIEFTLVATFTKGNSASQHPVQVQVMYLPPEQLLQLQQDSYAWQSAANPSAIFSANTVPARFSVPFVGTANAYTIMYDGYNVFGSNRPSADYGMINSSHMGSMAFRAISQLQATEKVKFMDLCQVKDVRAWCPRAPRMAPYKYIRNPVFETQDRIVPNRNNITTTGAFGQQSGAIYVGNYKIMNRHLATHEDWENVEWEDYNRDILVARTTAHGADKLARCHCNTGVYYCKSRNKHYPVTSRVQASIGSRLVSTTQLDTRPICSLPSGISEPGDCGGILRCQHGVIGIVTAGGQGVVGFADVRDLFWVEHEAMEQGLTDYIQQLGNSFGQGFTAEITNYASQLSEMLIGADGMVERCLQTFVKVISAVVIATRSQGDVPTILATLALIGCDGSPWRWLKRQFCGIFKIPYVEKQGDDWLKKFTSYVNAFKGLDWVAEKIMKFIDWMKNKLIPQARERQEFTTNLKTLPLLEAQVATLEHSCPTTEQQETIFGNIQYLAHHCRRYAPLYAAEARRVYALEKRILGYIQFKSKQRIEPVCLLIHGTAGTGKSLATSIIGRKLAEYEHSEVYAIPPDSDHFDGYQQQAVVVMDDLNQNPDGKDMVAFCQMVSTVPYHVPMAAIEEKGMLFTSSYVLASTNSGSIHPPTVSNSKALSRRFAFDVDIEVSEHYKTHNGTLDVVNATQRCEDCCPANFKTCMPLICGEAYQLVDRRNGMRYSIDTMISAMRAEWKRRNQVGLCYVRLFQGPPQFKPLKISVDPEIPAPPAIADLLASVDSEEVREYCKKKGWIVEVPVTATTLERNVSIATTILSSLVLLTSVITLVYLVYRLFAGYQGPYTGLPNAKPKPPVLREVRAQGPLMDFGVGMMKKNIVTVRTGAGEFTGLGVHDHVLVLPKHSHPAEIVVVDGKETPVEDAYNLTDEQGVSLELTLVTLKRNEKFRDIRAMIPENPCGTNEAVVCVNTSNFPNAFLPVGKVEYYGYLNLAGSPTHRTMMYNFPTKAGQCGGVVLSTGKVLGIHIGGNGAQGFCAALKRSYFTKPQGKIDWVEPSKKHGFPVINAPSKTKLEPSVFFDVFEGVKEPAALHPKDPRLEVNLEEALFSKYTGNVDIEMPEEMKEAVDHYANQLLALDIPTEPLSMEEAIYGTEGLEALDLTTSAGYPYVTMGIKKRDILNKETRDVKKMQECIDKYGLNLPMVTYIKDELRSKEKVKKGKSRLIEASSLNDSVAMRCYFGNLYKAFHQNPGTLTGCAVGCDPDTFWSKIPVMMDGELFGFDYTAYDASLSPLMFQALQMVLEKIGFGEGKHFIDNLCYSHHLFRDKYYFVKGGMPSGCSGTSIFNSMINNIIIRTVVLQTYKGIELDQLKIIAYGDDVIASYPYRIDPAELAKAGAKLGLHMTPPDKSETYVDLDWTNVTFLKRNFVPDEKYPFLVHPVMPMKEIYESIRWTRDARNTQDHVRSLCLLAWHNGRKEYEEFCRKIRSVPVGRALHLPSYSSLLREWYEKF</sequence>
<protein>
    <recommendedName>
        <fullName>Genome polyprotein</fullName>
    </recommendedName>
    <component>
        <recommendedName>
            <fullName>P1</fullName>
        </recommendedName>
    </component>
    <component>
        <recommendedName>
            <fullName>Capsid protein VP0</fullName>
        </recommendedName>
        <alternativeName>
            <fullName>VP4-VP2</fullName>
        </alternativeName>
    </component>
    <component>
        <recommendedName>
            <fullName>Capsid protein VP4</fullName>
        </recommendedName>
        <alternativeName>
            <fullName>P1A</fullName>
        </alternativeName>
        <alternativeName>
            <fullName>Virion protein 4</fullName>
        </alternativeName>
    </component>
    <component>
        <recommendedName>
            <fullName>Capsid protein VP2</fullName>
        </recommendedName>
        <alternativeName>
            <fullName>P1B</fullName>
        </alternativeName>
        <alternativeName>
            <fullName>Virion protein 2</fullName>
        </alternativeName>
    </component>
    <component>
        <recommendedName>
            <fullName>Capsid protein VP3</fullName>
        </recommendedName>
        <alternativeName>
            <fullName>P1C</fullName>
        </alternativeName>
        <alternativeName>
            <fullName>Virion protein 3</fullName>
        </alternativeName>
    </component>
    <component>
        <recommendedName>
            <fullName>Capsid protein VP1</fullName>
        </recommendedName>
        <alternativeName>
            <fullName>P1D</fullName>
        </alternativeName>
        <alternativeName>
            <fullName>Virion protein 1</fullName>
        </alternativeName>
    </component>
    <component>
        <recommendedName>
            <fullName>P2</fullName>
        </recommendedName>
    </component>
    <component>
        <recommendedName>
            <fullName>Protease 2A</fullName>
            <shortName>P2A</shortName>
            <ecNumber evidence="2">3.4.22.29</ecNumber>
        </recommendedName>
        <alternativeName>
            <fullName>Picornain 2A</fullName>
        </alternativeName>
        <alternativeName>
            <fullName>Protein 2A</fullName>
        </alternativeName>
    </component>
    <component>
        <recommendedName>
            <fullName>Protein 2B</fullName>
            <shortName>P2B</shortName>
        </recommendedName>
    </component>
    <component>
        <recommendedName>
            <fullName>Protein 2C</fullName>
            <shortName>P2C</shortName>
            <ecNumber evidence="2">3.6.1.15</ecNumber>
        </recommendedName>
    </component>
    <component>
        <recommendedName>
            <fullName>P3</fullName>
        </recommendedName>
    </component>
    <component>
        <recommendedName>
            <fullName>Protein 3AB</fullName>
        </recommendedName>
    </component>
    <component>
        <recommendedName>
            <fullName>Protein 3A</fullName>
            <shortName>P3A</shortName>
        </recommendedName>
    </component>
    <component>
        <recommendedName>
            <fullName>Viral protein genome-linked</fullName>
            <shortName>VPg</shortName>
        </recommendedName>
        <alternativeName>
            <fullName>Protein 3B</fullName>
            <shortName>P3B</shortName>
        </alternativeName>
    </component>
    <component>
        <recommendedName>
            <fullName>Protein 3CD</fullName>
            <ecNumber>3.4.22.28</ecNumber>
        </recommendedName>
    </component>
    <component>
        <recommendedName>
            <fullName evidence="12">Protease 3C</fullName>
            <ecNumber evidence="12">3.4.22.28</ecNumber>
        </recommendedName>
        <alternativeName>
            <fullName evidence="12">Picornain 3C</fullName>
            <shortName evidence="12">P3C</shortName>
        </alternativeName>
    </component>
    <component>
        <recommendedName>
            <fullName evidence="10">RNA-directed RNA polymerase</fullName>
            <shortName>RdRp</shortName>
            <ecNumber evidence="10">2.7.7.48</ecNumber>
        </recommendedName>
        <alternativeName>
            <fullName>3D polymerase</fullName>
            <shortName>3Dpol</shortName>
        </alternativeName>
        <alternativeName>
            <fullName>Protein 3D</fullName>
            <shortName>3D</shortName>
        </alternativeName>
    </component>
</protein>
<proteinExistence type="evidence at protein level"/>
<keyword id="KW-0002">3D-structure</keyword>
<keyword id="KW-1072">Activation of host autophagy by virus</keyword>
<keyword id="KW-0067">ATP-binding</keyword>
<keyword id="KW-0068">Autocatalytic cleavage</keyword>
<keyword id="KW-0167">Capsid protein</keyword>
<keyword id="KW-0191">Covalent protein-RNA linkage</keyword>
<keyword id="KW-0235">DNA replication</keyword>
<keyword id="KW-1262">Eukaryotic host gene expression shutoff by virus</keyword>
<keyword id="KW-1193">Eukaryotic host translation shutoff by virus</keyword>
<keyword id="KW-0347">Helicase</keyword>
<keyword id="KW-1035">Host cytoplasm</keyword>
<keyword id="KW-1036">Host cytoplasmic vesicle</keyword>
<keyword id="KW-1190">Host gene expression shutoff by virus</keyword>
<keyword id="KW-1043">Host membrane</keyword>
<keyword id="KW-1192">Host mRNA suppression by virus</keyword>
<keyword id="KW-1048">Host nucleus</keyword>
<keyword id="KW-0945">Host-virus interaction</keyword>
<keyword id="KW-0378">Hydrolase</keyword>
<keyword id="KW-1090">Inhibition of host innate immune response by virus</keyword>
<keyword id="KW-1099">Inhibition of host mRNA nuclear export by virus</keyword>
<keyword id="KW-1088">Inhibition of host RIG-I by virus</keyword>
<keyword id="KW-1113">Inhibition of host RLR pathway by virus</keyword>
<keyword id="KW-0407">Ion channel</keyword>
<keyword id="KW-0406">Ion transport</keyword>
<keyword id="KW-0449">Lipoprotein</keyword>
<keyword id="KW-0460">Magnesium</keyword>
<keyword id="KW-0472">Membrane</keyword>
<keyword id="KW-0479">Metal-binding</keyword>
<keyword id="KW-0519">Myristate</keyword>
<keyword id="KW-0547">Nucleotide-binding</keyword>
<keyword id="KW-0548">Nucleotidyltransferase</keyword>
<keyword id="KW-0597">Phosphoprotein</keyword>
<keyword id="KW-1172">Pore-mediated penetration of viral genome into host cell</keyword>
<keyword id="KW-0645">Protease</keyword>
<keyword id="KW-0677">Repeat</keyword>
<keyword id="KW-0694">RNA-binding</keyword>
<keyword id="KW-0696">RNA-directed RNA polymerase</keyword>
<keyword id="KW-1143">T=pseudo3 icosahedral capsid protein</keyword>
<keyword id="KW-0788">Thiol protease</keyword>
<keyword id="KW-0808">Transferase</keyword>
<keyword id="KW-0813">Transport</keyword>
<keyword id="KW-1161">Viral attachment to host cell</keyword>
<keyword id="KW-0899">Viral immunoevasion</keyword>
<keyword id="KW-1182">Viral ion channel</keyword>
<keyword id="KW-1162">Viral penetration into host cytoplasm</keyword>
<keyword id="KW-0693">Viral RNA replication</keyword>
<keyword id="KW-0946">Virion</keyword>
<keyword id="KW-1164">Virus endocytosis by host</keyword>
<keyword id="KW-1160">Virus entry into host cell</keyword>
<keyword id="KW-0862">Zinc</keyword>
<keyword id="KW-0863">Zinc-finger</keyword>
<accession>O41174</accession>
<comment type="function">
    <molecule>Capsid protein VP1</molecule>
    <text evidence="2">Forms an icosahedral capsid of pseudo T=3 symmetry with capsid proteins VP2 and VP3 (By similarity). The capsid is 300 Angstroms in diameter, composed of 60 copies of each capsid protein and enclosing the viral positive strand RNA genome (By similarity). Capsid protein VP1 mainly forms the vertices of the capsid (By similarity). Capsid protein VP1 interacts with host cell receptor to provide virion attachment to target host cells (By similarity). This attachment induces virion internalization (By similarity). Tyrosine kinases are probably involved in the entry process (By similarity). After binding to its receptor, the capsid undergoes conformational changes (By similarity). Capsid protein VP1 N-terminus (that contains an amphipathic alpha-helix) and capsid protein VP4 are externalized (By similarity). Together, they shape a pore in the host membrane through which viral genome is translocated to host cell cytoplasm (By similarity).</text>
</comment>
<comment type="function">
    <molecule>Capsid protein VP2</molecule>
    <text evidence="2">Forms an icosahedral capsid of pseudo T=3 symmetry with capsid proteins VP2 and VP3 (By similarity). The capsid is 300 Angstroms in diameter, composed of 60 copies of each capsid protein and enclosing the viral positive strand RNA genome (By similarity).</text>
</comment>
<comment type="function">
    <molecule>Capsid protein VP3</molecule>
    <text evidence="2">Forms an icosahedral capsid of pseudo T=3 symmetry with capsid proteins VP2 and VP3 (By similarity). The capsid is 300 Angstroms in diameter, composed of 60 copies of each capsid protein and enclosing the viral positive strand RNA genome (By similarity).</text>
</comment>
<comment type="function">
    <molecule>Capsid protein VP4</molecule>
    <text evidence="2">Lies on the inner surface of the capsid shell (By similarity). After binding to the host receptor, the capsid undergoes conformational changes (By similarity). Capsid protein VP4 is released, Capsid protein VP1 N-terminus is externalized, and together, they shape a pore in the host membrane through which the viral genome is translocated into the host cell cytoplasm (By similarity).</text>
</comment>
<comment type="function">
    <molecule>Capsid protein VP0</molecule>
    <text evidence="2">Component of immature procapsids, which is cleaved into capsid proteins VP4 and VP2 after maturation (By similarity). Allows the capsid to remain inactive before the maturation step (By similarity).</text>
</comment>
<comment type="function">
    <molecule>Protease 2A</molecule>
    <text evidence="2 3">Cysteine protease that cleaves viral polyprotein and specific host proteins (By similarity). It is responsible for the autocatalytic cleavage between the P1 and P2 regions, which is the first cleavage occurring in the polyprotein (By similarity). Also cleaves the host translation initiation factor EIF4G1, in order to shut down the capped cellular mRNA translation (By similarity). Inhibits the host nucleus-cytoplasm protein and RNA trafficking by cleaving host members of the nuclear pores (By similarity). Counteracts stress granule formation probably by antagonizing its assembly or promoting its dissassembly (By similarity).</text>
</comment>
<comment type="function">
    <molecule>Protein 2B</molecule>
    <text evidence="2">Plays an essential role in the virus replication cycle by acting as a viroporin. Creates a pore in the host endoplasmic reticulum and as a consequence releases Ca2+ in the cytoplasm of infected cell. In turn, high levels of cytoplasmic calcium may trigger membrane trafficking and transport of viral ER-associated proteins to viroplasms, sites of viral genome replication.</text>
</comment>
<comment type="function">
    <molecule>Protein 2C</molecule>
    <text evidence="2">Induces and associates with structural rearrangements of intracellular membranes. Displays RNA-binding, nucleotide binding and NTPase activities. May play a role in virion morphogenesis and viral RNA encapsidation by interacting with the capsid protein VP3.</text>
</comment>
<comment type="function">
    <molecule>Protein 3AB</molecule>
    <text evidence="2">Localizes the viral replication complex to the surface of membranous vesicles. Together with protein 3CD binds the Cis-Active RNA Element (CRE) which is involved in RNA synthesis initiation. Acts as a cofactor to stimulate the activity of 3D polymerase, maybe through a nucleid acid chaperone activity.</text>
</comment>
<comment type="function">
    <molecule>Protein 3A</molecule>
    <text evidence="2 5">Localizes the viral replication complex to the surface of membranous vesicles (By similarity). It inhibits host cell endoplasmic reticulum-to-Golgi apparatus transport and causes the disassembly of the Golgi complex, possibly through GBF1 interaction (By similarity). This would result in depletion of MHC, trail receptors and IFN receptors at the host cell surface (By similarity). Plays an essential role in viral RNA replication by recruiting ACBD3 and PI4KB at the viral replication sites, thereby allowing the formation of the rearranged membranous structures where viral replication takes place (By similarity).</text>
</comment>
<comment type="function">
    <molecule>Viral protein genome-linked</molecule>
    <text evidence="2">Acts as a primer for viral RNA replication and remains covalently bound to viral genomic RNA. VPg is uridylylated prior to priming replication into VPg-pUpU. The oriI viral genomic sequence may act as a template for this. The VPg-pUpU is then used as primer on the genomic RNA poly(A) by the RNA-dependent RNA polymerase to replicate the viral genome. During genome replication, the VPg-RNA linkage is removed by the host TDP2, thereby accelerating replication. During the late stage of the replication cycle, host TDP2 is excluded from sites of viral RNA synthesis and encapsidation, allowing for the generation of progeny virions.</text>
</comment>
<comment type="function">
    <molecule>Protein 3CD</molecule>
    <text evidence="2">Involved in the viral replication complex and viral polypeptide maturation. It exhibits protease activity with a specificity and catalytic efficiency that is different from protease 3C. Protein 3CD lacks polymerase activity. Protein 3CD binds to the 5'UTR of the viral genome.</text>
</comment>
<comment type="function">
    <molecule>RNA-directed RNA polymerase</molecule>
    <text evidence="2">Replicates the viral genomic RNA on the surface of intracellular membranes. May form linear arrays of subunits that propagate along a strong head-to-tail interaction called interface-I. Covalently attaches UMP to a tyrosine of VPg, which is used to prime RNA synthesis. The positive stranded RNA genome is first replicated at virus induced membranous vesicles, creating a dsRNA genomic replication form. This dsRNA is then used as template to synthesize positive stranded RNA genomes. ss(+)RNA genomes are either translated, replicated or encapsidated.</text>
</comment>
<comment type="function">
    <molecule>Protease 3C</molecule>
    <text evidence="2 4">Major viral protease that mediates proteolytic processing of the polyprotein (By similarity). Cleaves host EIF5B, contributing to host translation shutoff (By similarity). Also cleaves host PABPC1, contributing to host translation shutoff (By similarity). Cleaves host NLRP1, triggers host N-glycine-mediated degradation of the autoinhibitory NLRP1 N-terminal fragment (By similarity).</text>
</comment>
<comment type="catalytic activity">
    <molecule>Protein 2C</molecule>
    <reaction evidence="2">
        <text>a ribonucleoside 5'-triphosphate + H2O = a ribonucleoside 5'-diphosphate + phosphate + H(+)</text>
        <dbReference type="Rhea" id="RHEA:23680"/>
        <dbReference type="ChEBI" id="CHEBI:15377"/>
        <dbReference type="ChEBI" id="CHEBI:15378"/>
        <dbReference type="ChEBI" id="CHEBI:43474"/>
        <dbReference type="ChEBI" id="CHEBI:57930"/>
        <dbReference type="ChEBI" id="CHEBI:61557"/>
        <dbReference type="EC" id="3.6.1.15"/>
    </reaction>
</comment>
<comment type="catalytic activity">
    <molecule>Protease 2A</molecule>
    <reaction evidence="2">
        <text>Selective cleavage of Tyr-|-Gly bond in the picornavirus polyprotein.</text>
        <dbReference type="EC" id="3.4.22.29"/>
    </reaction>
</comment>
<comment type="catalytic activity">
    <molecule>RNA-directed RNA polymerase</molecule>
    <reaction evidence="10">
        <text>RNA(n) + a ribonucleoside 5'-triphosphate = RNA(n+1) + diphosphate</text>
        <dbReference type="Rhea" id="RHEA:21248"/>
        <dbReference type="Rhea" id="RHEA-COMP:14527"/>
        <dbReference type="Rhea" id="RHEA-COMP:17342"/>
        <dbReference type="ChEBI" id="CHEBI:33019"/>
        <dbReference type="ChEBI" id="CHEBI:61557"/>
        <dbReference type="ChEBI" id="CHEBI:140395"/>
        <dbReference type="EC" id="2.7.7.48"/>
    </reaction>
</comment>
<comment type="catalytic activity">
    <molecule>Protease 3C</molecule>
    <reaction evidence="12">
        <text>Selective cleavage of Gln-|-Gly bond in the poliovirus polyprotein. In other picornavirus reactions Glu may be substituted for Gln, and Ser or Thr for Gly.</text>
        <dbReference type="EC" id="3.4.22.28"/>
    </reaction>
</comment>
<comment type="cofactor">
    <molecule>RNA-directed RNA polymerase</molecule>
    <cofactor evidence="2">
        <name>Mg(2+)</name>
        <dbReference type="ChEBI" id="CHEBI:18420"/>
    </cofactor>
    <text evidence="2 5">Binds 2 magnesium ions that constitute a dinuclear catalytic metal center (By similarity). The magnesium ions are not prebound but only present for catalysis (By similarity). Requires the presence of 3CDpro or 3CPro (By similarity).</text>
</comment>
<comment type="activity regulation">
    <molecule>RNA-directed RNA polymerase</molecule>
    <text evidence="2">Replication or transcription is subject to high level of random mutations by the nucleotide analog ribavirin.</text>
</comment>
<comment type="subunit">
    <molecule>Capsid protein VP0</molecule>
    <text evidence="2">Interacts with capsid protein VP1 and capsid protein VP3 to form heterotrimeric protomers.</text>
</comment>
<comment type="subunit">
    <molecule>Capsid protein VP1</molecule>
    <text evidence="2">Interacts with capsid protein VP0, and capsid protein VP3 to form heterotrimeric protomers (By similarity). Five protomers subsequently associate to form pentamers which serve as building blocks for the capsid (By similarity). Interacts with capsid protein VP2, capsid protein VP3 and capsid protein VP4 following cleavage of capsid protein VP0 (By similarity).</text>
</comment>
<comment type="subunit">
    <molecule>Capsid protein VP2</molecule>
    <text evidence="2">Interacts with capsid protein VP1 and capsid protein VP3 in the mature capsid.</text>
</comment>
<comment type="subunit">
    <molecule>Capsid protein VP3</molecule>
    <text evidence="2">Interacts with capsid protein VP0 and capsid protein VP1 to form heterotrimeric protomers (By similarity). Five protomers subsequently associate to form pentamers which serve as building blocks for the capsid (By similarity). Interacts with capsid protein VP4 in the mature capsid (By similarity). Interacts with protein 2C; this interaction may be important for virion morphogenesis (By similarity).</text>
</comment>
<comment type="subunit">
    <molecule>Capsid protein VP4</molecule>
    <text evidence="2">Interacts with capsid protein VP1 and capsid protein VP3.</text>
</comment>
<comment type="subunit">
    <molecule>Protease 2A</molecule>
    <text evidence="6">Homodimer.</text>
</comment>
<comment type="subunit">
    <molecule>Protein 2C</molecule>
    <text evidence="2">Homohexamer; forms a hexameric ring structure with 6-fold symmetry characteristic of AAA+ ATPases (By similarity). Interacts (via N-terminus) with host RTN3 (via reticulon domain); this interaction is important for viral replication (By similarity). Interacts with capsid protein VP3; this interaction may be important for virion morphogenesis (By similarity).</text>
</comment>
<comment type="subunit">
    <molecule>Protein 3AB</molecule>
    <text evidence="2">Interacts with protein 3CD.</text>
</comment>
<comment type="subunit">
    <molecule>Protein 3A</molecule>
    <text evidence="2">Homodimer (By similarity). Interacts with host GBF1 (By similarity). Interacts (via GOLD domain) with host ACBD3 (via GOLD domain); this interaction allows the formation of a viral protein 3A/ACBD3 heterotetramer with a 2:2 stoichiometry, which will stimulate the recruitment of host PI4KB in order to synthesize PI4P at the viral RNA replication sites (By similarity).</text>
</comment>
<comment type="subunit">
    <molecule>Viral protein genome-linked</molecule>
    <text evidence="2">Interacts with RNA-directed RNA polymerase.</text>
</comment>
<comment type="subunit">
    <molecule>Protein 3CD</molecule>
    <text evidence="2">Interacts with protein 3AB and with RNA-directed RNA polymerase.</text>
</comment>
<comment type="subunit">
    <molecule>RNA-directed RNA polymerase</molecule>
    <text evidence="2">Interacts with Viral protein genome-linked and with protein 3CD.</text>
</comment>
<comment type="subcellular location">
    <molecule>Capsid protein VP0</molecule>
    <subcellularLocation>
        <location>Virion</location>
    </subcellularLocation>
    <subcellularLocation>
        <location evidence="14">Host cytoplasm</location>
    </subcellularLocation>
</comment>
<comment type="subcellular location">
    <molecule>Capsid protein VP4</molecule>
    <subcellularLocation>
        <location>Virion</location>
    </subcellularLocation>
</comment>
<comment type="subcellular location">
    <molecule>Capsid protein VP2</molecule>
    <subcellularLocation>
        <location evidence="2">Virion</location>
    </subcellularLocation>
    <subcellularLocation>
        <location evidence="14">Host cytoplasm</location>
    </subcellularLocation>
</comment>
<comment type="subcellular location">
    <molecule>Capsid protein VP3</molecule>
    <subcellularLocation>
        <location evidence="2">Virion</location>
    </subcellularLocation>
    <subcellularLocation>
        <location evidence="14">Host cytoplasm</location>
    </subcellularLocation>
</comment>
<comment type="subcellular location">
    <molecule>Capsid protein VP1</molecule>
    <subcellularLocation>
        <location evidence="2">Virion</location>
    </subcellularLocation>
    <subcellularLocation>
        <location evidence="14">Host cytoplasm</location>
    </subcellularLocation>
</comment>
<comment type="subcellular location">
    <molecule>Protein 2B</molecule>
    <subcellularLocation>
        <location evidence="14">Host cytoplasmic vesicle membrane</location>
        <topology evidence="14">Peripheral membrane protein</topology>
        <orientation evidence="14">Cytoplasmic side</orientation>
    </subcellularLocation>
    <text>Probably localizes to the surface of intracellular membrane vesicles that are induced after virus infection as the site for viral RNA replication. These vesicles are derived from the endoplasmic reticulum.</text>
</comment>
<comment type="subcellular location">
    <molecule>Protein 2C</molecule>
    <subcellularLocation>
        <location evidence="14">Host cytoplasmic vesicle membrane</location>
        <topology evidence="14">Peripheral membrane protein</topology>
        <orientation evidence="14">Cytoplasmic side</orientation>
    </subcellularLocation>
    <text>Probably localizes to the surface of intracellular membrane vesicles that are induced after virus infection as the site for viral RNA replication. These vesicles are derived from the endoplasmic reticulum.</text>
</comment>
<comment type="subcellular location">
    <molecule>Protein 3A</molecule>
    <subcellularLocation>
        <location evidence="14">Host cytoplasmic vesicle membrane</location>
        <topology evidence="14">Peripheral membrane protein</topology>
        <orientation evidence="14">Cytoplasmic side</orientation>
    </subcellularLocation>
    <text>Probably localizes to the surface of intracellular membrane vesicles that are induced after virus infection as the site for viral RNA replication. These vesicles are derived from the endoplasmic reticulum.</text>
</comment>
<comment type="subcellular location">
    <molecule>Protein 3AB</molecule>
    <subcellularLocation>
        <location evidence="14">Host cytoplasmic vesicle membrane</location>
        <topology evidence="14">Peripheral membrane protein</topology>
        <orientation evidence="14">Cytoplasmic side</orientation>
    </subcellularLocation>
    <text>Probably localizes to the surface of intracellular membrane vesicles that are induced after virus infection as the site for viral RNA replication. These vesicles are derived from the endoplasmic reticulum.</text>
</comment>
<comment type="subcellular location">
    <molecule>Viral protein genome-linked</molecule>
    <subcellularLocation>
        <location evidence="2">Virion</location>
    </subcellularLocation>
    <subcellularLocation>
        <location evidence="7">Host cytoplasm</location>
    </subcellularLocation>
</comment>
<comment type="subcellular location">
    <molecule>Protease 3C</molecule>
    <subcellularLocation>
        <location>Host cytoplasm</location>
    </subcellularLocation>
</comment>
<comment type="subcellular location">
    <molecule>Protein 3CD</molecule>
    <subcellularLocation>
        <location evidence="2">Host nucleus</location>
    </subcellularLocation>
    <subcellularLocation>
        <location evidence="2">Host cytoplasm</location>
    </subcellularLocation>
    <subcellularLocation>
        <location evidence="14">Host cytoplasmic vesicle membrane</location>
        <topology evidence="14">Peripheral membrane protein</topology>
        <orientation evidence="14">Cytoplasmic side</orientation>
    </subcellularLocation>
    <text>Probably localizes to the surface of intracellular membrane vesicles that are induced after virus infection as the site for viral RNA replication. These vesicles are derived from the endoplasmic reticulum.</text>
</comment>
<comment type="subcellular location">
    <molecule>RNA-directed RNA polymerase</molecule>
    <subcellularLocation>
        <location evidence="14">Host cytoplasmic vesicle membrane</location>
        <topology evidence="14">Peripheral membrane protein</topology>
        <orientation evidence="14">Cytoplasmic side</orientation>
    </subcellularLocation>
    <text>Probably localizes to the surface of intracellular membrane vesicles that are induced after virus infection as the site for viral RNA replication. These vesicles are derived from the endoplasmic reticulum.</text>
</comment>
<comment type="domain">
    <molecule>Protein 2C</molecule>
    <text evidence="1 2">The N-terminus has membrane-binding (By similarity). The N-terminus also displays RNA-binding properties (By similarity). The N-terminus is involved in oligomerization (By similarity). The central part contains an ATPase domain and a degenerate C4-type zinc-finger with only 3 cysteines (By similarity). The C-terminus is involved in RNA-binding (By similarity). The extreme C-terminus contains a region involved in oligomerization (By similarity).</text>
</comment>
<comment type="PTM">
    <molecule>Genome polyprotein</molecule>
    <text evidence="2">Specific enzymatic cleavages in vivo by the viral proteases yield processing intermediates and the mature proteins.</text>
</comment>
<comment type="PTM">
    <molecule>Capsid protein VP0</molecule>
    <text evidence="2">Myristoylation is required for the formation of pentamers during virus assembly. Further assembly of 12 pentamers and a molecule of genomic RNA generates the provirion.</text>
</comment>
<comment type="PTM">
    <molecule>Capsid protein VP0</molecule>
    <text evidence="2">During virion maturation, immature virions are rendered infectious following cleavage of VP0 into VP4 and VP2. This maturation seems to be an autocatalytic event triggered by the presence of RNA in the capsid and it is followed by a conformational change infectious virion.</text>
</comment>
<comment type="PTM">
    <molecule>Capsid protein VP4</molecule>
    <text evidence="2">Myristoylation is required during RNA encapsidation and formation of the mature virus particle.</text>
</comment>
<comment type="PTM">
    <molecule>Viral protein genome-linked</molecule>
    <text evidence="2">VPg is uridylylated by the polymerase into VPg-pUpU. This acts as a nucleotide-peptide primer for the genomic RNA replication.</text>
</comment>
<comment type="similarity">
    <text evidence="14">Belongs to the picornaviruses polyprotein family.</text>
</comment>
<evidence type="ECO:0000250" key="1">
    <source>
        <dbReference type="UniProtKB" id="B9VUU3"/>
    </source>
</evidence>
<evidence type="ECO:0000250" key="2">
    <source>
        <dbReference type="UniProtKB" id="P03300"/>
    </source>
</evidence>
<evidence type="ECO:0000250" key="3">
    <source>
        <dbReference type="UniProtKB" id="P03301"/>
    </source>
</evidence>
<evidence type="ECO:0000250" key="4">
    <source>
        <dbReference type="UniProtKB" id="P03303"/>
    </source>
</evidence>
<evidence type="ECO:0000250" key="5">
    <source>
        <dbReference type="UniProtKB" id="P03313"/>
    </source>
</evidence>
<evidence type="ECO:0000250" key="6">
    <source>
        <dbReference type="UniProtKB" id="P04936"/>
    </source>
</evidence>
<evidence type="ECO:0000250" key="7">
    <source>
        <dbReference type="UniProtKB" id="Q66478"/>
    </source>
</evidence>
<evidence type="ECO:0000250" key="8">
    <source>
        <dbReference type="UniProtKB" id="Q9QF31"/>
    </source>
</evidence>
<evidence type="ECO:0000255" key="9"/>
<evidence type="ECO:0000255" key="10">
    <source>
        <dbReference type="PROSITE-ProRule" id="PRU00539"/>
    </source>
</evidence>
<evidence type="ECO:0000255" key="11">
    <source>
        <dbReference type="PROSITE-ProRule" id="PRU00551"/>
    </source>
</evidence>
<evidence type="ECO:0000255" key="12">
    <source>
        <dbReference type="PROSITE-ProRule" id="PRU01222"/>
    </source>
</evidence>
<evidence type="ECO:0000256" key="13">
    <source>
        <dbReference type="SAM" id="MobiDB-lite"/>
    </source>
</evidence>
<evidence type="ECO:0000305" key="14"/>
<evidence type="ECO:0007829" key="15">
    <source>
        <dbReference type="PDB" id="6Q69"/>
    </source>
</evidence>
<feature type="initiator methionine" description="Removed; by host" evidence="2">
    <location>
        <position position="1"/>
    </location>
</feature>
<feature type="chain" id="PRO_0000426581" description="Genome polyprotein">
    <location>
        <begin position="2"/>
        <end position="2168"/>
    </location>
</feature>
<feature type="chain" id="PRO_0000426582" description="P1">
    <location>
        <begin position="2"/>
        <end position="835"/>
    </location>
</feature>
<feature type="chain" id="PRO_0000426583" description="Capsid protein VP0">
    <location>
        <begin position="2"/>
        <end position="315"/>
    </location>
</feature>
<feature type="chain" id="PRO_0000426584" description="Capsid protein VP4">
    <location>
        <begin position="2"/>
        <end position="69"/>
    </location>
</feature>
<feature type="chain" id="PRO_0000426585" description="Capsid protein VP2">
    <location>
        <begin position="70"/>
        <end position="315"/>
    </location>
</feature>
<feature type="chain" id="PRO_0000426586" description="Capsid protein VP3">
    <location>
        <begin position="316"/>
        <end position="548"/>
    </location>
</feature>
<feature type="chain" id="PRO_0000426587" description="Capsid protein VP1">
    <location>
        <begin position="549"/>
        <end position="835"/>
    </location>
</feature>
<feature type="chain" id="PRO_0000426588" description="P2">
    <location>
        <begin position="836"/>
        <end position="1413"/>
    </location>
</feature>
<feature type="chain" id="PRO_0000426589" description="Protease 2A">
    <location>
        <begin position="836"/>
        <end position="985"/>
    </location>
</feature>
<feature type="chain" id="PRO_0000040063" description="Protein 2B">
    <location>
        <begin position="986"/>
        <end position="1084"/>
    </location>
</feature>
<feature type="chain" id="PRO_0000040064" description="Protein 2C">
    <location>
        <begin position="1085"/>
        <end position="1413"/>
    </location>
</feature>
<feature type="chain" id="PRO_0000426590" description="P3">
    <location>
        <begin position="1414"/>
        <end position="2168"/>
    </location>
</feature>
<feature type="chain" id="PRO_0000426591" description="Protein 3AB">
    <location>
        <begin position="1414"/>
        <end position="1524"/>
    </location>
</feature>
<feature type="chain" id="PRO_0000040065" description="Protein 3A">
    <location>
        <begin position="1414"/>
        <end position="1502"/>
    </location>
</feature>
<feature type="chain" id="PRO_0000426592" description="Viral protein genome-linked">
    <location>
        <begin position="1503"/>
        <end position="1524"/>
    </location>
</feature>
<feature type="chain" id="PRO_0000426593" description="Protein 3CD">
    <location>
        <begin position="1525"/>
        <end position="2168"/>
    </location>
</feature>
<feature type="chain" id="PRO_0000426594" description="Protease 3C">
    <location>
        <begin position="1525"/>
        <end position="1707"/>
    </location>
</feature>
<feature type="chain" id="PRO_0000426595" description="RNA-directed RNA polymerase">
    <location>
        <begin position="1708"/>
        <end position="2168"/>
    </location>
</feature>
<feature type="topological domain" description="Cytoplasmic" evidence="9">
    <location>
        <begin position="2"/>
        <end position="1479"/>
    </location>
</feature>
<feature type="intramembrane region" evidence="9">
    <location>
        <begin position="1480"/>
        <end position="1495"/>
    </location>
</feature>
<feature type="topological domain" description="Cytoplasmic" evidence="9">
    <location>
        <begin position="1496"/>
        <end position="2168"/>
    </location>
</feature>
<feature type="domain" description="SF3 helicase" evidence="11">
    <location>
        <begin position="1189"/>
        <end position="1347"/>
    </location>
</feature>
<feature type="domain" description="Peptidase C3" evidence="12">
    <location>
        <begin position="1525"/>
        <end position="1703"/>
    </location>
</feature>
<feature type="domain" description="RdRp catalytic" evidence="10">
    <location>
        <begin position="1934"/>
        <end position="2048"/>
    </location>
</feature>
<feature type="zinc finger region" description="C4-type; degenerate" evidence="1">
    <location>
        <begin position="1354"/>
        <end position="1370"/>
    </location>
</feature>
<feature type="region of interest" description="Disordered" evidence="13">
    <location>
        <begin position="1"/>
        <end position="20"/>
    </location>
</feature>
<feature type="region of interest" description="Amphipathic alpha-helix" evidence="9">
    <location>
        <begin position="551"/>
        <end position="567"/>
    </location>
</feature>
<feature type="region of interest" description="Amphipathic alpha-helix" evidence="9">
    <location>
        <begin position="554"/>
        <end position="575"/>
    </location>
</feature>
<feature type="region of interest" description="Disordered" evidence="13">
    <location>
        <begin position="576"/>
        <end position="607"/>
    </location>
</feature>
<feature type="region of interest" description="Oligomerization" evidence="2">
    <location>
        <begin position="1085"/>
        <end position="1223"/>
    </location>
</feature>
<feature type="region of interest" description="Membrane-binding" evidence="2">
    <location>
        <begin position="1085"/>
        <end position="1157"/>
    </location>
</feature>
<feature type="region of interest" description="RNA-binding" evidence="2">
    <location>
        <begin position="1106"/>
        <end position="1110"/>
    </location>
</feature>
<feature type="region of interest" description="RNA-binding" evidence="2">
    <location>
        <begin position="1397"/>
        <end position="1404"/>
    </location>
</feature>
<feature type="region of interest" description="Oligomerization" evidence="2">
    <location>
        <begin position="1408"/>
        <end position="1413"/>
    </location>
</feature>
<feature type="compositionally biased region" description="Polar residues" evidence="13">
    <location>
        <begin position="576"/>
        <end position="589"/>
    </location>
</feature>
<feature type="active site" description="For protease 2A activity" evidence="2">
    <location>
        <position position="856"/>
    </location>
</feature>
<feature type="active site" description="For protease 2A activity" evidence="2">
    <location>
        <position position="874"/>
    </location>
</feature>
<feature type="active site" description="For protease 2A activity" evidence="2">
    <location>
        <position position="945"/>
    </location>
</feature>
<feature type="active site" description="For protease 3C activity" evidence="12">
    <location>
        <position position="1564"/>
    </location>
</feature>
<feature type="active site" description="For protease 3C activity" evidence="12">
    <location>
        <position position="1595"/>
    </location>
</feature>
<feature type="active site" description="For protease 3C activity" evidence="12">
    <location>
        <position position="1671"/>
    </location>
</feature>
<feature type="binding site" evidence="8">
    <location>
        <position position="891"/>
    </location>
    <ligand>
        <name>Zn(2+)</name>
        <dbReference type="ChEBI" id="CHEBI:29105"/>
        <label>1</label>
        <note>structural</note>
    </ligand>
</feature>
<feature type="binding site" evidence="8">
    <location>
        <position position="893"/>
    </location>
    <ligand>
        <name>Zn(2+)</name>
        <dbReference type="ChEBI" id="CHEBI:29105"/>
        <label>1</label>
        <note>structural</note>
    </ligand>
</feature>
<feature type="binding site" evidence="8">
    <location>
        <position position="951"/>
    </location>
    <ligand>
        <name>Zn(2+)</name>
        <dbReference type="ChEBI" id="CHEBI:29105"/>
        <label>1</label>
        <note>structural</note>
    </ligand>
</feature>
<feature type="binding site" evidence="8">
    <location>
        <position position="953"/>
    </location>
    <ligand>
        <name>Zn(2+)</name>
        <dbReference type="ChEBI" id="CHEBI:29105"/>
        <label>1</label>
        <note>structural</note>
    </ligand>
</feature>
<feature type="binding site" evidence="1">
    <location>
        <position position="1354"/>
    </location>
    <ligand>
        <name>Zn(2+)</name>
        <dbReference type="ChEBI" id="CHEBI:29105"/>
        <label>2</label>
    </ligand>
</feature>
<feature type="binding site" evidence="1">
    <location>
        <position position="1365"/>
    </location>
    <ligand>
        <name>Zn(2+)</name>
        <dbReference type="ChEBI" id="CHEBI:29105"/>
        <label>2</label>
    </ligand>
</feature>
<feature type="binding site" evidence="1">
    <location>
        <position position="1370"/>
    </location>
    <ligand>
        <name>Zn(2+)</name>
        <dbReference type="ChEBI" id="CHEBI:29105"/>
        <label>2</label>
    </ligand>
</feature>
<feature type="binding site" evidence="2">
    <location>
        <position position="1940"/>
    </location>
    <ligand>
        <name>Mg(2+)</name>
        <dbReference type="ChEBI" id="CHEBI:18420"/>
        <label>1</label>
        <note>catalytic; for RdRp activity</note>
    </ligand>
</feature>
<feature type="binding site" evidence="2">
    <location>
        <position position="1940"/>
    </location>
    <ligand>
        <name>Mg(2+)</name>
        <dbReference type="ChEBI" id="CHEBI:18420"/>
        <label>2</label>
        <note>catalytic; for RdRp activity</note>
    </ligand>
</feature>
<feature type="binding site" evidence="2">
    <location>
        <position position="2035"/>
    </location>
    <ligand>
        <name>Mg(2+)</name>
        <dbReference type="ChEBI" id="CHEBI:18420"/>
        <label>1</label>
        <note>catalytic; for RdRp activity</note>
    </ligand>
</feature>
<feature type="binding site" evidence="2">
    <location>
        <position position="2035"/>
    </location>
    <ligand>
        <name>Mg(2+)</name>
        <dbReference type="ChEBI" id="CHEBI:18420"/>
        <label>2</label>
        <note>catalytic; for RdRp activity</note>
    </ligand>
</feature>
<feature type="site" description="Cleavage; by autolysis" evidence="2">
    <location>
        <begin position="69"/>
        <end position="70"/>
    </location>
</feature>
<feature type="site" description="Cleavage; by protease 3C" evidence="3">
    <location>
        <begin position="315"/>
        <end position="316"/>
    </location>
</feature>
<feature type="site" description="Cleavage; by autolysis" evidence="3">
    <location>
        <begin position="835"/>
        <end position="836"/>
    </location>
</feature>
<feature type="site" description="Cleavage; by protease 3C" evidence="3">
    <location>
        <begin position="985"/>
        <end position="986"/>
    </location>
</feature>
<feature type="site" description="Cleavage; by protease 3C" evidence="3">
    <location>
        <begin position="1084"/>
        <end position="1085"/>
    </location>
</feature>
<feature type="site" description="Involved in the interaction with host RTN3" evidence="7">
    <location>
        <position position="1109"/>
    </location>
</feature>
<feature type="site" description="Cleavage; by protease 3C" evidence="3">
    <location>
        <begin position="1413"/>
        <end position="1414"/>
    </location>
</feature>
<feature type="site" description="Cleavage; by protease 3C" evidence="3">
    <location>
        <begin position="1502"/>
        <end position="1503"/>
    </location>
</feature>
<feature type="site" description="Cleavage; by protease 3C" evidence="3">
    <location>
        <begin position="1524"/>
        <end position="1525"/>
    </location>
</feature>
<feature type="site" description="Cleavage; by protease 3C" evidence="3">
    <location>
        <begin position="1707"/>
        <end position="1708"/>
    </location>
</feature>
<feature type="modified residue" description="O-(5'-phospho-RNA)-tyrosine" evidence="2">
    <location>
        <position position="1505"/>
    </location>
</feature>
<feature type="lipid moiety-binding region" description="N-myristoyl glycine; by host" evidence="2">
    <location>
        <position position="2"/>
    </location>
</feature>
<feature type="helix" evidence="15">
    <location>
        <begin position="1432"/>
        <end position="1442"/>
    </location>
</feature>
<feature type="helix" evidence="15">
    <location>
        <begin position="1445"/>
        <end position="1453"/>
    </location>
</feature>
<feature type="helix" evidence="15">
    <location>
        <begin position="1462"/>
        <end position="1464"/>
    </location>
</feature>
<feature type="strand" evidence="15">
    <location>
        <begin position="1466"/>
        <end position="1470"/>
    </location>
</feature>
<dbReference type="EC" id="3.4.22.29" evidence="2"/>
<dbReference type="EC" id="3.6.1.15" evidence="2"/>
<dbReference type="EC" id="3.4.22.28" evidence="12"/>
<dbReference type="EC" id="2.7.7.48" evidence="10"/>
<dbReference type="EMBL" id="Y14459">
    <property type="protein sequence ID" value="CAA74807.1"/>
    <property type="molecule type" value="Genomic_RNA"/>
</dbReference>
<dbReference type="PDB" id="6Q69">
    <property type="method" value="X-ray"/>
    <property type="resolution" value="2.75 A"/>
    <property type="chains" value="B/D=1414-1472"/>
</dbReference>
<dbReference type="PDBsum" id="6Q69"/>
<dbReference type="SMR" id="O41174"/>
<dbReference type="MEROPS" id="C03.014"/>
<dbReference type="MEROPS" id="C03.020"/>
<dbReference type="MEROPS" id="N08.001"/>
<dbReference type="Proteomes" id="UP000008160">
    <property type="component" value="Genome"/>
</dbReference>
<dbReference type="GO" id="GO:0044162">
    <property type="term" value="C:host cell cytoplasmic vesicle membrane"/>
    <property type="evidence" value="ECO:0007669"/>
    <property type="project" value="UniProtKB-SubCell"/>
</dbReference>
<dbReference type="GO" id="GO:0042025">
    <property type="term" value="C:host cell nucleus"/>
    <property type="evidence" value="ECO:0007669"/>
    <property type="project" value="UniProtKB-SubCell"/>
</dbReference>
<dbReference type="GO" id="GO:0016020">
    <property type="term" value="C:membrane"/>
    <property type="evidence" value="ECO:0007669"/>
    <property type="project" value="UniProtKB-KW"/>
</dbReference>
<dbReference type="GO" id="GO:0039618">
    <property type="term" value="C:T=pseudo3 icosahedral viral capsid"/>
    <property type="evidence" value="ECO:0007669"/>
    <property type="project" value="UniProtKB-KW"/>
</dbReference>
<dbReference type="GO" id="GO:0005524">
    <property type="term" value="F:ATP binding"/>
    <property type="evidence" value="ECO:0007669"/>
    <property type="project" value="UniProtKB-KW"/>
</dbReference>
<dbReference type="GO" id="GO:0016887">
    <property type="term" value="F:ATP hydrolysis activity"/>
    <property type="evidence" value="ECO:0007669"/>
    <property type="project" value="InterPro"/>
</dbReference>
<dbReference type="GO" id="GO:0015267">
    <property type="term" value="F:channel activity"/>
    <property type="evidence" value="ECO:0007669"/>
    <property type="project" value="UniProtKB-KW"/>
</dbReference>
<dbReference type="GO" id="GO:0004197">
    <property type="term" value="F:cysteine-type endopeptidase activity"/>
    <property type="evidence" value="ECO:0007669"/>
    <property type="project" value="UniProtKB-EC"/>
</dbReference>
<dbReference type="GO" id="GO:0003723">
    <property type="term" value="F:RNA binding"/>
    <property type="evidence" value="ECO:0007669"/>
    <property type="project" value="UniProtKB-KW"/>
</dbReference>
<dbReference type="GO" id="GO:0003724">
    <property type="term" value="F:RNA helicase activity"/>
    <property type="evidence" value="ECO:0007669"/>
    <property type="project" value="InterPro"/>
</dbReference>
<dbReference type="GO" id="GO:0003968">
    <property type="term" value="F:RNA-directed RNA polymerase activity"/>
    <property type="evidence" value="ECO:0007669"/>
    <property type="project" value="UniProtKB-KW"/>
</dbReference>
<dbReference type="GO" id="GO:0005198">
    <property type="term" value="F:structural molecule activity"/>
    <property type="evidence" value="ECO:0007669"/>
    <property type="project" value="InterPro"/>
</dbReference>
<dbReference type="GO" id="GO:0008270">
    <property type="term" value="F:zinc ion binding"/>
    <property type="evidence" value="ECO:0007669"/>
    <property type="project" value="UniProtKB-KW"/>
</dbReference>
<dbReference type="GO" id="GO:0006260">
    <property type="term" value="P:DNA replication"/>
    <property type="evidence" value="ECO:0007669"/>
    <property type="project" value="UniProtKB-KW"/>
</dbReference>
<dbReference type="GO" id="GO:0006351">
    <property type="term" value="P:DNA-templated transcription"/>
    <property type="evidence" value="ECO:0007669"/>
    <property type="project" value="InterPro"/>
</dbReference>
<dbReference type="GO" id="GO:0075509">
    <property type="term" value="P:endocytosis involved in viral entry into host cell"/>
    <property type="evidence" value="ECO:0007669"/>
    <property type="project" value="UniProtKB-KW"/>
</dbReference>
<dbReference type="GO" id="GO:0034220">
    <property type="term" value="P:monoatomic ion transmembrane transport"/>
    <property type="evidence" value="ECO:0007669"/>
    <property type="project" value="UniProtKB-KW"/>
</dbReference>
<dbReference type="GO" id="GO:0006508">
    <property type="term" value="P:proteolysis"/>
    <property type="evidence" value="ECO:0007669"/>
    <property type="project" value="UniProtKB-KW"/>
</dbReference>
<dbReference type="GO" id="GO:0044694">
    <property type="term" value="P:symbiont genome entry into host cell via pore formation in plasma membrane"/>
    <property type="evidence" value="ECO:0007669"/>
    <property type="project" value="UniProtKB-KW"/>
</dbReference>
<dbReference type="GO" id="GO:0039520">
    <property type="term" value="P:symbiont-mediated activation of host autophagy"/>
    <property type="evidence" value="ECO:0000250"/>
    <property type="project" value="UniProtKB"/>
</dbReference>
<dbReference type="GO" id="GO:0039540">
    <property type="term" value="P:symbiont-mediated suppression of host cytoplasmic pattern recognition receptor signaling pathway via inhibition of RIG-I activity"/>
    <property type="evidence" value="ECO:0007669"/>
    <property type="project" value="UniProtKB-KW"/>
</dbReference>
<dbReference type="GO" id="GO:0039522">
    <property type="term" value="P:symbiont-mediated suppression of host mRNA export from nucleus"/>
    <property type="evidence" value="ECO:0007669"/>
    <property type="project" value="UniProtKB-KW"/>
</dbReference>
<dbReference type="GO" id="GO:0039694">
    <property type="term" value="P:viral RNA genome replication"/>
    <property type="evidence" value="ECO:0007669"/>
    <property type="project" value="InterPro"/>
</dbReference>
<dbReference type="GO" id="GO:0019062">
    <property type="term" value="P:virion attachment to host cell"/>
    <property type="evidence" value="ECO:0007669"/>
    <property type="project" value="UniProtKB-KW"/>
</dbReference>
<dbReference type="CDD" id="cd00205">
    <property type="entry name" value="rhv_like"/>
    <property type="match status" value="3"/>
</dbReference>
<dbReference type="FunFam" id="1.20.960.20:FF:000001">
    <property type="entry name" value="Genome polyprotein"/>
    <property type="match status" value="1"/>
</dbReference>
<dbReference type="FunFam" id="2.40.10.10:FF:000018">
    <property type="entry name" value="Genome polyprotein"/>
    <property type="match status" value="1"/>
</dbReference>
<dbReference type="FunFam" id="2.40.10.10:FF:000022">
    <property type="entry name" value="Genome polyprotein"/>
    <property type="match status" value="1"/>
</dbReference>
<dbReference type="FunFam" id="2.60.120.20:FF:000002">
    <property type="entry name" value="Genome polyprotein"/>
    <property type="match status" value="1"/>
</dbReference>
<dbReference type="FunFam" id="3.30.70.270:FF:000008">
    <property type="entry name" value="Genome polyprotein"/>
    <property type="match status" value="1"/>
</dbReference>
<dbReference type="FunFam" id="4.10.880.10:FF:000001">
    <property type="entry name" value="Genome polyprotein"/>
    <property type="match status" value="1"/>
</dbReference>
<dbReference type="FunFam" id="4.10.880.10:FF:000002">
    <property type="entry name" value="Genome polyprotein"/>
    <property type="match status" value="1"/>
</dbReference>
<dbReference type="Gene3D" id="1.20.960.20">
    <property type="match status" value="1"/>
</dbReference>
<dbReference type="Gene3D" id="2.60.120.20">
    <property type="match status" value="3"/>
</dbReference>
<dbReference type="Gene3D" id="3.30.70.270">
    <property type="match status" value="1"/>
</dbReference>
<dbReference type="Gene3D" id="6.10.20.20">
    <property type="entry name" value="Poliovirus 3A protein-like"/>
    <property type="match status" value="1"/>
</dbReference>
<dbReference type="Gene3D" id="4.10.880.10">
    <property type="entry name" value="Poliovirus 3D polymerase Domain 1 (Nucleotidyltransferase)"/>
    <property type="match status" value="2"/>
</dbReference>
<dbReference type="Gene3D" id="2.40.10.10">
    <property type="entry name" value="Trypsin-like serine proteases"/>
    <property type="match status" value="4"/>
</dbReference>
<dbReference type="InterPro" id="IPR003593">
    <property type="entry name" value="AAA+_ATPase"/>
</dbReference>
<dbReference type="InterPro" id="IPR043502">
    <property type="entry name" value="DNA/RNA_pol_sf"/>
</dbReference>
<dbReference type="InterPro" id="IPR000605">
    <property type="entry name" value="Helicase_SF3_ssDNA/RNA_vir"/>
</dbReference>
<dbReference type="InterPro" id="IPR014759">
    <property type="entry name" value="Helicase_SF3_ssRNA_vir"/>
</dbReference>
<dbReference type="InterPro" id="IPR027417">
    <property type="entry name" value="P-loop_NTPase"/>
</dbReference>
<dbReference type="InterPro" id="IPR014838">
    <property type="entry name" value="P3A"/>
</dbReference>
<dbReference type="InterPro" id="IPR036203">
    <property type="entry name" value="P3A_soluble_dom"/>
</dbReference>
<dbReference type="InterPro" id="IPR044067">
    <property type="entry name" value="PCV_3C_PRO"/>
</dbReference>
<dbReference type="InterPro" id="IPR000081">
    <property type="entry name" value="Peptidase_C3"/>
</dbReference>
<dbReference type="InterPro" id="IPR000199">
    <property type="entry name" value="Peptidase_C3A/C3B_picornavir"/>
</dbReference>
<dbReference type="InterPro" id="IPR009003">
    <property type="entry name" value="Peptidase_S1_PA"/>
</dbReference>
<dbReference type="InterPro" id="IPR043504">
    <property type="entry name" value="Peptidase_S1_PA_chymotrypsin"/>
</dbReference>
<dbReference type="InterPro" id="IPR003138">
    <property type="entry name" value="Pico_P1A"/>
</dbReference>
<dbReference type="InterPro" id="IPR002527">
    <property type="entry name" value="Pico_P2B"/>
</dbReference>
<dbReference type="InterPro" id="IPR001676">
    <property type="entry name" value="Picornavirus_capsid"/>
</dbReference>
<dbReference type="InterPro" id="IPR043128">
    <property type="entry name" value="Rev_trsase/Diguanyl_cyclase"/>
</dbReference>
<dbReference type="InterPro" id="IPR033703">
    <property type="entry name" value="Rhv-like"/>
</dbReference>
<dbReference type="InterPro" id="IPR001205">
    <property type="entry name" value="RNA-dir_pol_C"/>
</dbReference>
<dbReference type="InterPro" id="IPR007094">
    <property type="entry name" value="RNA-dir_pol_PSvirus"/>
</dbReference>
<dbReference type="InterPro" id="IPR029053">
    <property type="entry name" value="Viral_coat"/>
</dbReference>
<dbReference type="Pfam" id="PF08727">
    <property type="entry name" value="P3A"/>
    <property type="match status" value="1"/>
</dbReference>
<dbReference type="Pfam" id="PF00548">
    <property type="entry name" value="Peptidase_C3"/>
    <property type="match status" value="1"/>
</dbReference>
<dbReference type="Pfam" id="PF02226">
    <property type="entry name" value="Pico_P1A"/>
    <property type="match status" value="1"/>
</dbReference>
<dbReference type="Pfam" id="PF00947">
    <property type="entry name" value="Pico_P2A"/>
    <property type="match status" value="1"/>
</dbReference>
<dbReference type="Pfam" id="PF01552">
    <property type="entry name" value="Pico_P2B"/>
    <property type="match status" value="1"/>
</dbReference>
<dbReference type="Pfam" id="PF00680">
    <property type="entry name" value="RdRP_1"/>
    <property type="match status" value="1"/>
</dbReference>
<dbReference type="Pfam" id="PF00073">
    <property type="entry name" value="Rhv"/>
    <property type="match status" value="2"/>
</dbReference>
<dbReference type="Pfam" id="PF22663">
    <property type="entry name" value="Rhv_5"/>
    <property type="match status" value="1"/>
</dbReference>
<dbReference type="Pfam" id="PF00910">
    <property type="entry name" value="RNA_helicase"/>
    <property type="match status" value="1"/>
</dbReference>
<dbReference type="SMART" id="SM00382">
    <property type="entry name" value="AAA"/>
    <property type="match status" value="1"/>
</dbReference>
<dbReference type="SUPFAM" id="SSF56672">
    <property type="entry name" value="DNA/RNA polymerases"/>
    <property type="match status" value="1"/>
</dbReference>
<dbReference type="SUPFAM" id="SSF52540">
    <property type="entry name" value="P-loop containing nucleoside triphosphate hydrolases"/>
    <property type="match status" value="1"/>
</dbReference>
<dbReference type="SUPFAM" id="SSF88633">
    <property type="entry name" value="Positive stranded ssRNA viruses"/>
    <property type="match status" value="2"/>
</dbReference>
<dbReference type="SUPFAM" id="SSF89043">
    <property type="entry name" value="Soluble domain of poliovirus core protein 3a"/>
    <property type="match status" value="1"/>
</dbReference>
<dbReference type="SUPFAM" id="SSF50494">
    <property type="entry name" value="Trypsin-like serine proteases"/>
    <property type="match status" value="2"/>
</dbReference>
<dbReference type="PROSITE" id="PS51874">
    <property type="entry name" value="PCV_3C_PRO"/>
    <property type="match status" value="1"/>
</dbReference>
<dbReference type="PROSITE" id="PS50507">
    <property type="entry name" value="RDRP_SSRNA_POS"/>
    <property type="match status" value="1"/>
</dbReference>
<dbReference type="PROSITE" id="PS51218">
    <property type="entry name" value="SF3_HELICASE_2"/>
    <property type="match status" value="1"/>
</dbReference>